<reference evidence="12" key="1">
    <citation type="journal article" date="1996" name="Parasitol. Res.">
        <title>A gene highly homologous to ACP1 encoding cysteine proteinase 3 in Entamoeba histolytica is present and expressed in E. dispar.</title>
        <authorList>
            <person name="Bruchhaus I."/>
            <person name="Tannich E."/>
        </authorList>
    </citation>
    <scope>NUCLEOTIDE SEQUENCE [MRNA]</scope>
</reference>
<reference evidence="13" key="2">
    <citation type="journal article" date="2005" name="Nature">
        <title>The genome of the protist parasite Entamoeba histolytica.</title>
        <authorList>
            <person name="Loftus B.J."/>
            <person name="Anderson I."/>
            <person name="Davies R."/>
            <person name="Alsmark U.C."/>
            <person name="Samuelson J."/>
            <person name="Amedeo P."/>
            <person name="Roncaglia P."/>
            <person name="Berriman M."/>
            <person name="Hirt R.P."/>
            <person name="Mann B.J."/>
            <person name="Nozaki T."/>
            <person name="Suh B."/>
            <person name="Pop M."/>
            <person name="Duchene M."/>
            <person name="Ackers J."/>
            <person name="Tannich E."/>
            <person name="Leippe M."/>
            <person name="Hofer M."/>
            <person name="Bruchhaus I."/>
            <person name="Willhoeft U."/>
            <person name="Bhattacharya A."/>
            <person name="Chillingworth T."/>
            <person name="Churcher C.M."/>
            <person name="Hance Z."/>
            <person name="Harris B."/>
            <person name="Harris D."/>
            <person name="Jagels K."/>
            <person name="Moule S."/>
            <person name="Mungall K.L."/>
            <person name="Ormond D."/>
            <person name="Squares R."/>
            <person name="Whitehead S."/>
            <person name="Quail M.A."/>
            <person name="Rabbinowitsch E."/>
            <person name="Norbertczak H."/>
            <person name="Price C."/>
            <person name="Wang Z."/>
            <person name="Guillen N."/>
            <person name="Gilchrist C."/>
            <person name="Stroup S.E."/>
            <person name="Bhattacharya S."/>
            <person name="Lohia A."/>
            <person name="Foster P.G."/>
            <person name="Sicheritz-Ponten T."/>
            <person name="Weber C."/>
            <person name="Singh U."/>
            <person name="Mukherjee C."/>
            <person name="El-Sayed N.M.A."/>
            <person name="Petri W.A."/>
            <person name="Clark C.G."/>
            <person name="Embley T.M."/>
            <person name="Barrell B.G."/>
            <person name="Fraser C.M."/>
            <person name="Hall N."/>
        </authorList>
    </citation>
    <scope>NUCLEOTIDE SEQUENCE [LARGE SCALE GENOMIC DNA]</scope>
    <source>
        <strain evidence="13">ATCC 30459 / HM-1:IMSS / ABRM</strain>
    </source>
</reference>
<reference evidence="11" key="3">
    <citation type="journal article" date="1993" name="J. Clin. Invest.">
        <title>Cloning of a virulence factor of Entamoeba histolytica. Pathogenic strains possess a unique cysteine proteinase gene.</title>
        <authorList>
            <person name="Reed S."/>
            <person name="Bouvier J."/>
            <person name="Pollack A.S."/>
            <person name="Engel J.C."/>
            <person name="Brown M."/>
            <person name="Hirata K."/>
            <person name="Que X."/>
            <person name="Eakin A."/>
            <person name="Hagblom P."/>
            <person name="Gillin F."/>
            <person name="McKerrow J.H."/>
        </authorList>
    </citation>
    <scope>NUCLEOTIDE SEQUENCE [GENOMIC DNA] OF 24-308</scope>
    <scope>PROTEIN SEQUENCE OF 93-100</scope>
    <scope>DEVELOPMENTAL STAGE</scope>
    <scope>POLYMORPHISM</scope>
    <source>
        <strain evidence="11">ATCC 30459 / HM-1:IMSS / ABRM</strain>
    </source>
</reference>
<reference evidence="10" key="4">
    <citation type="journal article" date="1990" name="Mol. Biochem. Parasitol.">
        <title>Amplification and sequencing of genomic DNA fragments encoding cysteine proteases from protozoan parasites.</title>
        <authorList>
            <person name="Eakin A.E."/>
            <person name="Bouvier J."/>
            <person name="Sakanari J.A."/>
            <person name="Craik C.S."/>
            <person name="McKerrow J.H."/>
        </authorList>
    </citation>
    <scope>NUCLEOTIDE SEQUENCE [GENOMIC DNA] OF 109-274</scope>
</reference>
<reference key="5">
    <citation type="journal article" date="2002" name="Mol. Biochem. Parasitol.">
        <title>Cysteine proteinases from distinct cellular compartments are recruited to phagocytic vesicles by Entamoeba histolytica.</title>
        <authorList>
            <person name="Que X."/>
            <person name="Brinen L.S."/>
            <person name="Perkins P."/>
            <person name="Herdman S."/>
            <person name="Hirata K."/>
            <person name="Torian B.E."/>
            <person name="Rubin H."/>
            <person name="McKerrow J.H."/>
            <person name="Reed S.L."/>
        </authorList>
    </citation>
    <scope>FUNCTION</scope>
    <scope>CATALYTIC ACTIVITY</scope>
    <scope>SUBCELLULAR LOCATION</scope>
    <scope>DEVELOPMENTAL STAGE</scope>
</reference>
<evidence type="ECO:0000250" key="1">
    <source>
        <dbReference type="UniProtKB" id="P07711"/>
    </source>
</evidence>
<evidence type="ECO:0000255" key="2"/>
<evidence type="ECO:0000255" key="3">
    <source>
        <dbReference type="PROSITE-ProRule" id="PRU10088"/>
    </source>
</evidence>
<evidence type="ECO:0000255" key="4">
    <source>
        <dbReference type="PROSITE-ProRule" id="PRU10089"/>
    </source>
</evidence>
<evidence type="ECO:0000255" key="5">
    <source>
        <dbReference type="PROSITE-ProRule" id="PRU10090"/>
    </source>
</evidence>
<evidence type="ECO:0000269" key="6">
    <source>
    </source>
</evidence>
<evidence type="ECO:0000269" key="7">
    <source>
    </source>
</evidence>
<evidence type="ECO:0000303" key="8">
    <source>
    </source>
</evidence>
<evidence type="ECO:0000305" key="9"/>
<evidence type="ECO:0000312" key="10">
    <source>
        <dbReference type="EMBL" id="AAA29094.1"/>
    </source>
</evidence>
<evidence type="ECO:0000312" key="11">
    <source>
        <dbReference type="EMBL" id="AAB26209.2"/>
    </source>
</evidence>
<evidence type="ECO:0000312" key="12">
    <source>
        <dbReference type="EMBL" id="CAA60673.1"/>
    </source>
</evidence>
<evidence type="ECO:0000312" key="13">
    <source>
        <dbReference type="EMBL" id="EAL47868.1"/>
    </source>
</evidence>
<proteinExistence type="evidence at protein level"/>
<name>CPP3_ENTH1</name>
<protein>
    <recommendedName>
        <fullName evidence="8">Cysteine proteinase 3</fullName>
        <shortName evidence="8">EhCP3</shortName>
        <ecNumber evidence="6">3.4.22.35</ecNumber>
    </recommendedName>
    <alternativeName>
        <fullName evidence="8">Cysteine proteinase ACP1</fullName>
    </alternativeName>
</protein>
<sequence>MFALILFVSLACANEVAFKQWAATHNKVFANRAEYLYRFAVFLDNKKFVEANANTELNVFADMTHEEFIQTHLGMTYEVPETTSNVKAAVKAAPESVDWRSIMNPAKDQGQCGSCWTFCTTAVLEGRVNKDLGKLYSFSEQQLVDCDASDNGCEGGHPSNSLKFIQENNGLGLESDYPYKAVAGTCKKVKNVATVTGSRRVTDGSETGLQTIIAENGPVAVGMDASRPSFQLYKKGTIYSDTKCRSRMMNHCVTAVGYGSNSNGKYWIIRNSWGTSWGDAGYFLLARDSNNMCGIGRDSNYPTGVKLI</sequence>
<organism evidence="13">
    <name type="scientific">Entamoeba histolytica (strain ATCC 30459 / HM-1:IMSS / ABRM)</name>
    <dbReference type="NCBI Taxonomy" id="294381"/>
    <lineage>
        <taxon>Eukaryota</taxon>
        <taxon>Amoebozoa</taxon>
        <taxon>Evosea</taxon>
        <taxon>Archamoebae</taxon>
        <taxon>Mastigamoebida</taxon>
        <taxon>Entamoebidae</taxon>
        <taxon>Entamoeba</taxon>
    </lineage>
</organism>
<gene>
    <name evidence="8" type="primary">CP3</name>
    <name evidence="8" type="synonym">ACP1</name>
    <name evidence="13" type="ORF">EHI_159610</name>
</gene>
<feature type="signal peptide" evidence="2">
    <location>
        <begin position="1"/>
        <end position="13"/>
    </location>
</feature>
<feature type="propeptide" id="PRO_0000026182" description="Activation peptide" evidence="7">
    <location>
        <begin position="14"/>
        <end position="92"/>
    </location>
</feature>
<feature type="chain" id="PRO_0000026183" description="Cysteine proteinase 3">
    <location>
        <begin position="93"/>
        <end position="308"/>
    </location>
</feature>
<feature type="active site" evidence="3">
    <location>
        <position position="115"/>
    </location>
</feature>
<feature type="active site" evidence="4">
    <location>
        <position position="251"/>
    </location>
</feature>
<feature type="active site" evidence="5">
    <location>
        <position position="271"/>
    </location>
</feature>
<feature type="disulfide bond" evidence="1">
    <location>
        <begin position="112"/>
        <end position="153"/>
    </location>
</feature>
<feature type="disulfide bond" evidence="1">
    <location>
        <begin position="146"/>
        <end position="186"/>
    </location>
</feature>
<feature type="sequence conflict" description="In Ref. 3; AAB26209." evidence="9" ref="3">
    <original>A</original>
    <variation>G</variation>
    <location>
        <position position="61"/>
    </location>
</feature>
<feature type="sequence conflict" description="In Ref. 3; AAB26209." evidence="9" ref="3">
    <original>GGH</original>
    <variation>RG</variation>
    <location>
        <begin position="155"/>
        <end position="157"/>
    </location>
</feature>
<feature type="sequence conflict" description="In Ref. 4; AAA29094." evidence="9" ref="4">
    <original>IR</original>
    <variation>VK</variation>
    <location>
        <begin position="269"/>
        <end position="270"/>
    </location>
</feature>
<accession>P36184</accession>
<accession>A0A175JIK3</accession>
<accession>C4LX41</accession>
<accession>Q24831</accession>
<dbReference type="EC" id="3.4.22.35" evidence="6"/>
<dbReference type="EMBL" id="X87214">
    <property type="protein sequence ID" value="CAA60673.1"/>
    <property type="molecule type" value="mRNA"/>
</dbReference>
<dbReference type="EMBL" id="DS571167">
    <property type="protein sequence ID" value="EAL47868.1"/>
    <property type="molecule type" value="Genomic_DNA"/>
</dbReference>
<dbReference type="EMBL" id="S58669">
    <property type="protein sequence ID" value="AAB26209.2"/>
    <property type="molecule type" value="Genomic_DNA"/>
</dbReference>
<dbReference type="EMBL" id="M27307">
    <property type="protein sequence ID" value="AAA29094.1"/>
    <property type="molecule type" value="Genomic_DNA"/>
</dbReference>
<dbReference type="PIR" id="C44938">
    <property type="entry name" value="C44938"/>
</dbReference>
<dbReference type="RefSeq" id="XP_653254.1">
    <property type="nucleotide sequence ID" value="XM_648162.1"/>
</dbReference>
<dbReference type="SMR" id="P36184"/>
<dbReference type="STRING" id="5759.C4LX41"/>
<dbReference type="MEROPS" id="C01.050"/>
<dbReference type="MEROPS" id="I29.003"/>
<dbReference type="EnsemblProtists" id="GAT93296">
    <property type="protein sequence ID" value="GAT93296"/>
    <property type="gene ID" value="CL6EHI_159610"/>
</dbReference>
<dbReference type="EnsemblProtists" id="rna_EHI_159610-1">
    <property type="protein sequence ID" value="rna_EHI_159610-1"/>
    <property type="gene ID" value="EHI_159610"/>
</dbReference>
<dbReference type="GeneID" id="3407594"/>
<dbReference type="KEGG" id="ehi:EHI_159610"/>
<dbReference type="VEuPathDB" id="AmoebaDB:EHI5A_081680"/>
<dbReference type="VEuPathDB" id="AmoebaDB:EHI7A_046640"/>
<dbReference type="VEuPathDB" id="AmoebaDB:EHI8A_045840"/>
<dbReference type="VEuPathDB" id="AmoebaDB:EHI_159610"/>
<dbReference type="VEuPathDB" id="AmoebaDB:KM1_093780"/>
<dbReference type="eggNOG" id="KOG1543">
    <property type="taxonomic scope" value="Eukaryota"/>
</dbReference>
<dbReference type="HOGENOM" id="CLU_012184_1_2_1"/>
<dbReference type="OMA" id="HNGEYSE"/>
<dbReference type="OrthoDB" id="10259130at2759"/>
<dbReference type="Proteomes" id="UP000001926">
    <property type="component" value="Partially assembled WGS sequence"/>
</dbReference>
<dbReference type="GO" id="GO:0005615">
    <property type="term" value="C:extracellular space"/>
    <property type="evidence" value="ECO:0000318"/>
    <property type="project" value="GO_Central"/>
</dbReference>
<dbReference type="GO" id="GO:0005764">
    <property type="term" value="C:lysosome"/>
    <property type="evidence" value="ECO:0000318"/>
    <property type="project" value="GO_Central"/>
</dbReference>
<dbReference type="GO" id="GO:0045335">
    <property type="term" value="C:phagocytic vesicle"/>
    <property type="evidence" value="ECO:0007669"/>
    <property type="project" value="UniProtKB-SubCell"/>
</dbReference>
<dbReference type="GO" id="GO:0004197">
    <property type="term" value="F:cysteine-type endopeptidase activity"/>
    <property type="evidence" value="ECO:0000318"/>
    <property type="project" value="GO_Central"/>
</dbReference>
<dbReference type="GO" id="GO:0006955">
    <property type="term" value="P:immune response"/>
    <property type="evidence" value="ECO:0000318"/>
    <property type="project" value="GO_Central"/>
</dbReference>
<dbReference type="GO" id="GO:2001235">
    <property type="term" value="P:positive regulation of apoptotic signaling pathway"/>
    <property type="evidence" value="ECO:0000318"/>
    <property type="project" value="GO_Central"/>
</dbReference>
<dbReference type="GO" id="GO:0051603">
    <property type="term" value="P:proteolysis involved in protein catabolic process"/>
    <property type="evidence" value="ECO:0000318"/>
    <property type="project" value="GO_Central"/>
</dbReference>
<dbReference type="CDD" id="cd02248">
    <property type="entry name" value="Peptidase_C1A"/>
    <property type="match status" value="1"/>
</dbReference>
<dbReference type="FunFam" id="3.90.70.10:FF:000109">
    <property type="entry name" value="Cysteine protease"/>
    <property type="match status" value="1"/>
</dbReference>
<dbReference type="Gene3D" id="3.90.70.10">
    <property type="entry name" value="Cysteine proteinases"/>
    <property type="match status" value="1"/>
</dbReference>
<dbReference type="InterPro" id="IPR038765">
    <property type="entry name" value="Papain-like_cys_pep_sf"/>
</dbReference>
<dbReference type="InterPro" id="IPR025661">
    <property type="entry name" value="Pept_asp_AS"/>
</dbReference>
<dbReference type="InterPro" id="IPR000169">
    <property type="entry name" value="Pept_cys_AS"/>
</dbReference>
<dbReference type="InterPro" id="IPR025660">
    <property type="entry name" value="Pept_his_AS"/>
</dbReference>
<dbReference type="InterPro" id="IPR013128">
    <property type="entry name" value="Peptidase_C1A"/>
</dbReference>
<dbReference type="InterPro" id="IPR000668">
    <property type="entry name" value="Peptidase_C1A_C"/>
</dbReference>
<dbReference type="InterPro" id="IPR039417">
    <property type="entry name" value="Peptidase_C1A_papain-like"/>
</dbReference>
<dbReference type="InterPro" id="IPR013201">
    <property type="entry name" value="Prot_inhib_I29"/>
</dbReference>
<dbReference type="PANTHER" id="PTHR12411">
    <property type="entry name" value="CYSTEINE PROTEASE FAMILY C1-RELATED"/>
    <property type="match status" value="1"/>
</dbReference>
<dbReference type="Pfam" id="PF08246">
    <property type="entry name" value="Inhibitor_I29"/>
    <property type="match status" value="1"/>
</dbReference>
<dbReference type="Pfam" id="PF00112">
    <property type="entry name" value="Peptidase_C1"/>
    <property type="match status" value="1"/>
</dbReference>
<dbReference type="PRINTS" id="PR00705">
    <property type="entry name" value="PAPAIN"/>
</dbReference>
<dbReference type="SMART" id="SM00848">
    <property type="entry name" value="Inhibitor_I29"/>
    <property type="match status" value="1"/>
</dbReference>
<dbReference type="SMART" id="SM00645">
    <property type="entry name" value="Pept_C1"/>
    <property type="match status" value="1"/>
</dbReference>
<dbReference type="SUPFAM" id="SSF54001">
    <property type="entry name" value="Cysteine proteinases"/>
    <property type="match status" value="1"/>
</dbReference>
<dbReference type="PROSITE" id="PS00640">
    <property type="entry name" value="THIOL_PROTEASE_ASN"/>
    <property type="match status" value="1"/>
</dbReference>
<dbReference type="PROSITE" id="PS00139">
    <property type="entry name" value="THIOL_PROTEASE_CYS"/>
    <property type="match status" value="1"/>
</dbReference>
<dbReference type="PROSITE" id="PS00639">
    <property type="entry name" value="THIOL_PROTEASE_HIS"/>
    <property type="match status" value="1"/>
</dbReference>
<comment type="function">
    <text evidence="6">Cysteine protease which may be involved in pathogenicity.</text>
</comment>
<comment type="catalytic activity">
    <reaction evidence="6">
        <text>Hydrolysis of proteins, including basement membrane collagen and azocasein. Preferential cleavage: Arg-Arg-|-Xaa in small molecule substrates including Z-Arg-Arg-|-NHMec.</text>
        <dbReference type="EC" id="3.4.22.35"/>
    </reaction>
</comment>
<comment type="subcellular location">
    <subcellularLocation>
        <location evidence="6">Cytoplasm</location>
    </subcellularLocation>
    <subcellularLocation>
        <location evidence="6">Cytoplasmic vesicle</location>
        <location evidence="6">Phagosome</location>
    </subcellularLocation>
    <text evidence="6">During phagocytosis, localizes to phagocytic vesicles.</text>
</comment>
<comment type="developmental stage">
    <text evidence="6 7">Expressed in trophozoites (at protein level).</text>
</comment>
<comment type="polymorphism">
    <text evidence="7">Expression appears to be higher in pathogenic strains such as HM-1:IMSS compared to non-pathogenic strains.</text>
</comment>
<comment type="similarity">
    <text evidence="3 4 5">Belongs to the peptidase C1 family.</text>
</comment>
<keyword id="KW-0963">Cytoplasm</keyword>
<keyword id="KW-0968">Cytoplasmic vesicle</keyword>
<keyword id="KW-0903">Direct protein sequencing</keyword>
<keyword id="KW-1015">Disulfide bond</keyword>
<keyword id="KW-0378">Hydrolase</keyword>
<keyword id="KW-0645">Protease</keyword>
<keyword id="KW-1185">Reference proteome</keyword>
<keyword id="KW-0732">Signal</keyword>
<keyword id="KW-0788">Thiol protease</keyword>
<keyword id="KW-0865">Zymogen</keyword>